<sequence>MSFNLRGAVLANVSGNSQDQLQETIVDAIQSGEEKMLPGLGVLFEVIWKNADENEKHEMLGTLEQGLKK</sequence>
<feature type="chain" id="PRO_1000131505" description="Small, acid-soluble spore protein I">
    <location>
        <begin position="1"/>
        <end position="69"/>
    </location>
</feature>
<organism>
    <name type="scientific">Bacillus mycoides (strain KBAB4)</name>
    <name type="common">Bacillus weihenstephanensis</name>
    <dbReference type="NCBI Taxonomy" id="315730"/>
    <lineage>
        <taxon>Bacteria</taxon>
        <taxon>Bacillati</taxon>
        <taxon>Bacillota</taxon>
        <taxon>Bacilli</taxon>
        <taxon>Bacillales</taxon>
        <taxon>Bacillaceae</taxon>
        <taxon>Bacillus</taxon>
        <taxon>Bacillus cereus group</taxon>
    </lineage>
</organism>
<protein>
    <recommendedName>
        <fullName evidence="1">Small, acid-soluble spore protein I</fullName>
        <shortName evidence="1">SASP I</shortName>
    </recommendedName>
</protein>
<dbReference type="EMBL" id="CP000903">
    <property type="protein sequence ID" value="ABY45553.1"/>
    <property type="molecule type" value="Genomic_DNA"/>
</dbReference>
<dbReference type="RefSeq" id="WP_000009511.1">
    <property type="nucleotide sequence ID" value="NZ_CAKMRX030000033.1"/>
</dbReference>
<dbReference type="SMR" id="A9VJM6"/>
<dbReference type="GeneID" id="51136250"/>
<dbReference type="KEGG" id="bwe:BcerKBAB4_4394"/>
<dbReference type="eggNOG" id="ENOG5032YQ7">
    <property type="taxonomic scope" value="Bacteria"/>
</dbReference>
<dbReference type="HOGENOM" id="CLU_188877_0_0_9"/>
<dbReference type="Proteomes" id="UP000002154">
    <property type="component" value="Chromosome"/>
</dbReference>
<dbReference type="GO" id="GO:0030436">
    <property type="term" value="P:asexual sporulation"/>
    <property type="evidence" value="ECO:0007669"/>
    <property type="project" value="UniProtKB-UniRule"/>
</dbReference>
<dbReference type="GO" id="GO:0030435">
    <property type="term" value="P:sporulation resulting in formation of a cellular spore"/>
    <property type="evidence" value="ECO:0007669"/>
    <property type="project" value="UniProtKB-KW"/>
</dbReference>
<dbReference type="HAMAP" id="MF_00669">
    <property type="entry name" value="SspI"/>
    <property type="match status" value="1"/>
</dbReference>
<dbReference type="InterPro" id="IPR017525">
    <property type="entry name" value="SspI"/>
</dbReference>
<dbReference type="NCBIfam" id="TIGR03092">
    <property type="entry name" value="SASP_sspI"/>
    <property type="match status" value="1"/>
</dbReference>
<dbReference type="Pfam" id="PF14098">
    <property type="entry name" value="SSPI"/>
    <property type="match status" value="1"/>
</dbReference>
<proteinExistence type="inferred from homology"/>
<accession>A9VJM6</accession>
<keyword id="KW-0749">Sporulation</keyword>
<evidence type="ECO:0000255" key="1">
    <source>
        <dbReference type="HAMAP-Rule" id="MF_00669"/>
    </source>
</evidence>
<name>SSPI_BACMK</name>
<gene>
    <name evidence="1" type="primary">sspI</name>
    <name type="ordered locus">BcerKBAB4_4394</name>
</gene>
<reference key="1">
    <citation type="journal article" date="2008" name="Chem. Biol. Interact.">
        <title>Extending the Bacillus cereus group genomics to putative food-borne pathogens of different toxicity.</title>
        <authorList>
            <person name="Lapidus A."/>
            <person name="Goltsman E."/>
            <person name="Auger S."/>
            <person name="Galleron N."/>
            <person name="Segurens B."/>
            <person name="Dossat C."/>
            <person name="Land M.L."/>
            <person name="Broussolle V."/>
            <person name="Brillard J."/>
            <person name="Guinebretiere M.-H."/>
            <person name="Sanchis V."/>
            <person name="Nguen-the C."/>
            <person name="Lereclus D."/>
            <person name="Richardson P."/>
            <person name="Wincker P."/>
            <person name="Weissenbach J."/>
            <person name="Ehrlich S.D."/>
            <person name="Sorokin A."/>
        </authorList>
    </citation>
    <scope>NUCLEOTIDE SEQUENCE [LARGE SCALE GENOMIC DNA]</scope>
    <source>
        <strain>KBAB4</strain>
    </source>
</reference>
<comment type="subcellular location">
    <subcellularLocation>
        <location evidence="1">Spore core</location>
    </subcellularLocation>
</comment>
<comment type="induction">
    <text evidence="1">Expressed only in the forespore compartment of sporulating cells.</text>
</comment>
<comment type="similarity">
    <text evidence="1">Belongs to the SspI family.</text>
</comment>